<evidence type="ECO:0000255" key="1">
    <source>
        <dbReference type="HAMAP-Rule" id="MF_00318"/>
    </source>
</evidence>
<comment type="function">
    <text evidence="1">Catalyzes the reversible conversion of 2-phosphoglycerate (2-PG) into phosphoenolpyruvate (PEP). It is essential for the degradation of carbohydrates via glycolysis.</text>
</comment>
<comment type="catalytic activity">
    <reaction evidence="1">
        <text>(2R)-2-phosphoglycerate = phosphoenolpyruvate + H2O</text>
        <dbReference type="Rhea" id="RHEA:10164"/>
        <dbReference type="ChEBI" id="CHEBI:15377"/>
        <dbReference type="ChEBI" id="CHEBI:58289"/>
        <dbReference type="ChEBI" id="CHEBI:58702"/>
        <dbReference type="EC" id="4.2.1.11"/>
    </reaction>
</comment>
<comment type="cofactor">
    <cofactor evidence="1">
        <name>Mg(2+)</name>
        <dbReference type="ChEBI" id="CHEBI:18420"/>
    </cofactor>
    <text evidence="1">Binds a second Mg(2+) ion via substrate during catalysis.</text>
</comment>
<comment type="pathway">
    <text evidence="1">Carbohydrate degradation; glycolysis; pyruvate from D-glyceraldehyde 3-phosphate: step 4/5.</text>
</comment>
<comment type="subcellular location">
    <subcellularLocation>
        <location evidence="1">Cytoplasm</location>
    </subcellularLocation>
    <subcellularLocation>
        <location evidence="1">Secreted</location>
    </subcellularLocation>
    <subcellularLocation>
        <location evidence="1">Cell surface</location>
    </subcellularLocation>
    <text evidence="1">Fractions of enolase are present in both the cytoplasm and on the cell surface.</text>
</comment>
<comment type="similarity">
    <text evidence="1">Belongs to the enolase family.</text>
</comment>
<reference key="1">
    <citation type="journal article" date="2005" name="Proc. Natl. Acad. Sci. U.S.A.">
        <title>The complete genome sequence of Mycobacterium avium subspecies paratuberculosis.</title>
        <authorList>
            <person name="Li L."/>
            <person name="Bannantine J.P."/>
            <person name="Zhang Q."/>
            <person name="Amonsin A."/>
            <person name="May B.J."/>
            <person name="Alt D."/>
            <person name="Banerji N."/>
            <person name="Kanjilal S."/>
            <person name="Kapur V."/>
        </authorList>
    </citation>
    <scope>NUCLEOTIDE SEQUENCE [LARGE SCALE GENOMIC DNA]</scope>
    <source>
        <strain>ATCC BAA-968 / K-10</strain>
    </source>
</reference>
<accession>Q741U7</accession>
<gene>
    <name evidence="1" type="primary">eno</name>
    <name type="ordered locus">MAP_0990</name>
</gene>
<keyword id="KW-0963">Cytoplasm</keyword>
<keyword id="KW-0324">Glycolysis</keyword>
<keyword id="KW-0456">Lyase</keyword>
<keyword id="KW-0460">Magnesium</keyword>
<keyword id="KW-0479">Metal-binding</keyword>
<keyword id="KW-1185">Reference proteome</keyword>
<keyword id="KW-0964">Secreted</keyword>
<feature type="chain" id="PRO_0000133928" description="Enolase">
    <location>
        <begin position="1"/>
        <end position="429"/>
    </location>
</feature>
<feature type="active site" description="Proton donor" evidence="1">
    <location>
        <position position="204"/>
    </location>
</feature>
<feature type="active site" description="Proton acceptor" evidence="1">
    <location>
        <position position="335"/>
    </location>
</feature>
<feature type="binding site" evidence="1">
    <location>
        <position position="162"/>
    </location>
    <ligand>
        <name>(2R)-2-phosphoglycerate</name>
        <dbReference type="ChEBI" id="CHEBI:58289"/>
    </ligand>
</feature>
<feature type="binding site" evidence="1">
    <location>
        <position position="241"/>
    </location>
    <ligand>
        <name>Mg(2+)</name>
        <dbReference type="ChEBI" id="CHEBI:18420"/>
    </ligand>
</feature>
<feature type="binding site" evidence="1">
    <location>
        <position position="283"/>
    </location>
    <ligand>
        <name>Mg(2+)</name>
        <dbReference type="ChEBI" id="CHEBI:18420"/>
    </ligand>
</feature>
<feature type="binding site" evidence="1">
    <location>
        <position position="310"/>
    </location>
    <ligand>
        <name>Mg(2+)</name>
        <dbReference type="ChEBI" id="CHEBI:18420"/>
    </ligand>
</feature>
<feature type="binding site" evidence="1">
    <location>
        <position position="335"/>
    </location>
    <ligand>
        <name>(2R)-2-phosphoglycerate</name>
        <dbReference type="ChEBI" id="CHEBI:58289"/>
    </ligand>
</feature>
<feature type="binding site" evidence="1">
    <location>
        <position position="364"/>
    </location>
    <ligand>
        <name>(2R)-2-phosphoglycerate</name>
        <dbReference type="ChEBI" id="CHEBI:58289"/>
    </ligand>
</feature>
<feature type="binding site" evidence="1">
    <location>
        <position position="365"/>
    </location>
    <ligand>
        <name>(2R)-2-phosphoglycerate</name>
        <dbReference type="ChEBI" id="CHEBI:58289"/>
    </ligand>
</feature>
<feature type="binding site" evidence="1">
    <location>
        <position position="386"/>
    </location>
    <ligand>
        <name>(2R)-2-phosphoglycerate</name>
        <dbReference type="ChEBI" id="CHEBI:58289"/>
    </ligand>
</feature>
<organism>
    <name type="scientific">Mycolicibacterium paratuberculosis (strain ATCC BAA-968 / K-10)</name>
    <name type="common">Mycobacterium paratuberculosis</name>
    <dbReference type="NCBI Taxonomy" id="262316"/>
    <lineage>
        <taxon>Bacteria</taxon>
        <taxon>Bacillati</taxon>
        <taxon>Actinomycetota</taxon>
        <taxon>Actinomycetes</taxon>
        <taxon>Mycobacteriales</taxon>
        <taxon>Mycobacteriaceae</taxon>
        <taxon>Mycobacterium</taxon>
        <taxon>Mycobacterium avium complex (MAC)</taxon>
    </lineage>
</organism>
<protein>
    <recommendedName>
        <fullName evidence="1">Enolase</fullName>
        <ecNumber evidence="1">4.2.1.11</ecNumber>
    </recommendedName>
    <alternativeName>
        <fullName evidence="1">2-phospho-D-glycerate hydro-lyase</fullName>
    </alternativeName>
    <alternativeName>
        <fullName evidence="1">2-phosphoglycerate dehydratase</fullName>
    </alternativeName>
</protein>
<dbReference type="EC" id="4.2.1.11" evidence="1"/>
<dbReference type="EMBL" id="AE016958">
    <property type="protein sequence ID" value="AAS03307.1"/>
    <property type="molecule type" value="Genomic_DNA"/>
</dbReference>
<dbReference type="RefSeq" id="WP_003877542.1">
    <property type="nucleotide sequence ID" value="NZ_CP106873.1"/>
</dbReference>
<dbReference type="SMR" id="Q741U7"/>
<dbReference type="STRING" id="262316.MAP_0990"/>
<dbReference type="GeneID" id="75268977"/>
<dbReference type="KEGG" id="mpa:MAP_0990"/>
<dbReference type="eggNOG" id="COG4948">
    <property type="taxonomic scope" value="Bacteria"/>
</dbReference>
<dbReference type="HOGENOM" id="CLU_031223_2_1_11"/>
<dbReference type="UniPathway" id="UPA00109">
    <property type="reaction ID" value="UER00187"/>
</dbReference>
<dbReference type="Proteomes" id="UP000000580">
    <property type="component" value="Chromosome"/>
</dbReference>
<dbReference type="GO" id="GO:0009986">
    <property type="term" value="C:cell surface"/>
    <property type="evidence" value="ECO:0007669"/>
    <property type="project" value="UniProtKB-SubCell"/>
</dbReference>
<dbReference type="GO" id="GO:0005576">
    <property type="term" value="C:extracellular region"/>
    <property type="evidence" value="ECO:0007669"/>
    <property type="project" value="UniProtKB-SubCell"/>
</dbReference>
<dbReference type="GO" id="GO:0000015">
    <property type="term" value="C:phosphopyruvate hydratase complex"/>
    <property type="evidence" value="ECO:0007669"/>
    <property type="project" value="InterPro"/>
</dbReference>
<dbReference type="GO" id="GO:0000287">
    <property type="term" value="F:magnesium ion binding"/>
    <property type="evidence" value="ECO:0007669"/>
    <property type="project" value="UniProtKB-UniRule"/>
</dbReference>
<dbReference type="GO" id="GO:0004634">
    <property type="term" value="F:phosphopyruvate hydratase activity"/>
    <property type="evidence" value="ECO:0007669"/>
    <property type="project" value="UniProtKB-UniRule"/>
</dbReference>
<dbReference type="GO" id="GO:0006096">
    <property type="term" value="P:glycolytic process"/>
    <property type="evidence" value="ECO:0007669"/>
    <property type="project" value="UniProtKB-UniRule"/>
</dbReference>
<dbReference type="CDD" id="cd03313">
    <property type="entry name" value="enolase"/>
    <property type="match status" value="1"/>
</dbReference>
<dbReference type="FunFam" id="3.20.20.120:FF:000001">
    <property type="entry name" value="Enolase"/>
    <property type="match status" value="1"/>
</dbReference>
<dbReference type="FunFam" id="3.30.390.10:FF:000001">
    <property type="entry name" value="Enolase"/>
    <property type="match status" value="1"/>
</dbReference>
<dbReference type="Gene3D" id="3.20.20.120">
    <property type="entry name" value="Enolase-like C-terminal domain"/>
    <property type="match status" value="1"/>
</dbReference>
<dbReference type="Gene3D" id="3.30.390.10">
    <property type="entry name" value="Enolase-like, N-terminal domain"/>
    <property type="match status" value="1"/>
</dbReference>
<dbReference type="HAMAP" id="MF_00318">
    <property type="entry name" value="Enolase"/>
    <property type="match status" value="1"/>
</dbReference>
<dbReference type="InterPro" id="IPR000941">
    <property type="entry name" value="Enolase"/>
</dbReference>
<dbReference type="InterPro" id="IPR036849">
    <property type="entry name" value="Enolase-like_C_sf"/>
</dbReference>
<dbReference type="InterPro" id="IPR029017">
    <property type="entry name" value="Enolase-like_N"/>
</dbReference>
<dbReference type="InterPro" id="IPR020810">
    <property type="entry name" value="Enolase_C"/>
</dbReference>
<dbReference type="InterPro" id="IPR020809">
    <property type="entry name" value="Enolase_CS"/>
</dbReference>
<dbReference type="InterPro" id="IPR020811">
    <property type="entry name" value="Enolase_N"/>
</dbReference>
<dbReference type="NCBIfam" id="TIGR01060">
    <property type="entry name" value="eno"/>
    <property type="match status" value="1"/>
</dbReference>
<dbReference type="PANTHER" id="PTHR11902">
    <property type="entry name" value="ENOLASE"/>
    <property type="match status" value="1"/>
</dbReference>
<dbReference type="PANTHER" id="PTHR11902:SF1">
    <property type="entry name" value="ENOLASE"/>
    <property type="match status" value="1"/>
</dbReference>
<dbReference type="Pfam" id="PF00113">
    <property type="entry name" value="Enolase_C"/>
    <property type="match status" value="1"/>
</dbReference>
<dbReference type="Pfam" id="PF03952">
    <property type="entry name" value="Enolase_N"/>
    <property type="match status" value="1"/>
</dbReference>
<dbReference type="PIRSF" id="PIRSF001400">
    <property type="entry name" value="Enolase"/>
    <property type="match status" value="1"/>
</dbReference>
<dbReference type="PRINTS" id="PR00148">
    <property type="entry name" value="ENOLASE"/>
</dbReference>
<dbReference type="SFLD" id="SFLDF00002">
    <property type="entry name" value="enolase"/>
    <property type="match status" value="1"/>
</dbReference>
<dbReference type="SFLD" id="SFLDG00178">
    <property type="entry name" value="enolase"/>
    <property type="match status" value="1"/>
</dbReference>
<dbReference type="SMART" id="SM01192">
    <property type="entry name" value="Enolase_C"/>
    <property type="match status" value="1"/>
</dbReference>
<dbReference type="SMART" id="SM01193">
    <property type="entry name" value="Enolase_N"/>
    <property type="match status" value="1"/>
</dbReference>
<dbReference type="SUPFAM" id="SSF51604">
    <property type="entry name" value="Enolase C-terminal domain-like"/>
    <property type="match status" value="1"/>
</dbReference>
<dbReference type="SUPFAM" id="SSF54826">
    <property type="entry name" value="Enolase N-terminal domain-like"/>
    <property type="match status" value="1"/>
</dbReference>
<dbReference type="PROSITE" id="PS00164">
    <property type="entry name" value="ENOLASE"/>
    <property type="match status" value="1"/>
</dbReference>
<sequence length="429" mass="44873">MPIIEQVGAREILDSRGNPTVEVEIALTDGTFARAAVPSGASTGEHEAVELRDGGERYGGKGVQKAVQAVLDEIGPAVIGLNADDQRLVDQALVDLDGTPDKSRLGGNAILGVSLAVAKAAADSAELPLFRYLGGPNAHILPVPMMNILNGGAHADTAVDIQEFMVAPIGAPSFAEALRWGAEVYHSLKSVLKKEGLSTGLGDEGGFAPDVAGTTAALDLIGRAIESAGFKLGTDVALALDAAATEFYSDGTGYKFEGSTRTAEQMAEFYAGLLGAYPLVSIEDPLSEDDWDGWAALTASIGDRVQLVGDDVFVTNPERLEEGIEKGVANALLVKVNQIGTLTETLDAVALAHHSGYRTMMSHRSGETEDTTIADLAVAVGSGQIKTGAPARSERVAKYNQLLRIEEALGDAARYAGDLAFPRFALETR</sequence>
<name>ENO_MYCPA</name>
<proteinExistence type="inferred from homology"/>